<dbReference type="EC" id="3.1.4.53"/>
<dbReference type="EMBL" id="U09455">
    <property type="protein sequence ID" value="AAA20401.1"/>
    <property type="molecule type" value="mRNA"/>
</dbReference>
<dbReference type="EMBL" id="U09457">
    <property type="protein sequence ID" value="AAB81869.1"/>
    <property type="molecule type" value="mRNA"/>
</dbReference>
<dbReference type="EMBL" id="U09456">
    <property type="protein sequence ID" value="AAA20393.1"/>
    <property type="molecule type" value="mRNA"/>
</dbReference>
<dbReference type="EMBL" id="U01280">
    <property type="protein sequence ID" value="AAA18925.1"/>
    <property type="molecule type" value="Unassigned_DNA"/>
</dbReference>
<dbReference type="EMBL" id="U01278">
    <property type="protein sequence ID" value="AAA18925.1"/>
    <property type="status" value="JOINED"/>
    <property type="molecule type" value="Unassigned_DNA"/>
</dbReference>
<dbReference type="EMBL" id="U01282">
    <property type="protein sequence ID" value="AAA18925.1"/>
    <property type="status" value="JOINED"/>
    <property type="molecule type" value="Unassigned_DNA"/>
</dbReference>
<dbReference type="EMBL" id="U01283">
    <property type="protein sequence ID" value="AAA18925.1"/>
    <property type="status" value="JOINED"/>
    <property type="molecule type" value="Unassigned_DNA"/>
</dbReference>
<dbReference type="EMBL" id="U01284">
    <property type="protein sequence ID" value="AAA18925.1"/>
    <property type="status" value="JOINED"/>
    <property type="molecule type" value="Unassigned_DNA"/>
</dbReference>
<dbReference type="EMBL" id="U01285">
    <property type="protein sequence ID" value="AAA18925.1"/>
    <property type="status" value="JOINED"/>
    <property type="molecule type" value="Unassigned_DNA"/>
</dbReference>
<dbReference type="EMBL" id="U01286">
    <property type="protein sequence ID" value="AAA18925.1"/>
    <property type="status" value="JOINED"/>
    <property type="molecule type" value="Unassigned_DNA"/>
</dbReference>
<dbReference type="EMBL" id="U01287">
    <property type="protein sequence ID" value="AAA18925.1"/>
    <property type="status" value="JOINED"/>
    <property type="molecule type" value="Unassigned_DNA"/>
</dbReference>
<dbReference type="EMBL" id="U01279">
    <property type="protein sequence ID" value="AAA18925.1"/>
    <property type="status" value="JOINED"/>
    <property type="molecule type" value="Unassigned_DNA"/>
</dbReference>
<dbReference type="EMBL" id="U01280">
    <property type="protein sequence ID" value="AAA18924.1"/>
    <property type="molecule type" value="Unassigned_DNA"/>
</dbReference>
<dbReference type="EMBL" id="U01278">
    <property type="protein sequence ID" value="AAA18924.1"/>
    <property type="status" value="JOINED"/>
    <property type="molecule type" value="Unassigned_DNA"/>
</dbReference>
<dbReference type="EMBL" id="U01282">
    <property type="protein sequence ID" value="AAA18924.1"/>
    <property type="status" value="JOINED"/>
    <property type="molecule type" value="Unassigned_DNA"/>
</dbReference>
<dbReference type="EMBL" id="U01283">
    <property type="protein sequence ID" value="AAA18924.1"/>
    <property type="status" value="JOINED"/>
    <property type="molecule type" value="Unassigned_DNA"/>
</dbReference>
<dbReference type="EMBL" id="U01284">
    <property type="protein sequence ID" value="AAA18924.1"/>
    <property type="status" value="JOINED"/>
    <property type="molecule type" value="Unassigned_DNA"/>
</dbReference>
<dbReference type="EMBL" id="U01285">
    <property type="protein sequence ID" value="AAA18924.1"/>
    <property type="status" value="JOINED"/>
    <property type="molecule type" value="Unassigned_DNA"/>
</dbReference>
<dbReference type="EMBL" id="U01286">
    <property type="protein sequence ID" value="AAA18924.1"/>
    <property type="status" value="JOINED"/>
    <property type="molecule type" value="Unassigned_DNA"/>
</dbReference>
<dbReference type="EMBL" id="U01287">
    <property type="protein sequence ID" value="AAA18924.1"/>
    <property type="status" value="JOINED"/>
    <property type="molecule type" value="Unassigned_DNA"/>
</dbReference>
<dbReference type="EMBL" id="U01279">
    <property type="protein sequence ID" value="AAA18924.1"/>
    <property type="status" value="JOINED"/>
    <property type="molecule type" value="Unassigned_DNA"/>
</dbReference>
<dbReference type="EMBL" id="AF031373">
    <property type="protein sequence ID" value="AAB95266.1"/>
    <property type="molecule type" value="mRNA"/>
</dbReference>
<dbReference type="EMBL" id="AF536974">
    <property type="protein sequence ID" value="AAN10116.1"/>
    <property type="molecule type" value="mRNA"/>
</dbReference>
<dbReference type="EMBL" id="EF102484">
    <property type="protein sequence ID" value="ABK97408.1"/>
    <property type="molecule type" value="mRNA"/>
</dbReference>
<dbReference type="EMBL" id="EF121818">
    <property type="protein sequence ID" value="ABL14108.1"/>
    <property type="molecule type" value="mRNA"/>
</dbReference>
<dbReference type="EMBL" id="AF536979">
    <property type="protein sequence ID" value="AAN10121.1"/>
    <property type="molecule type" value="mRNA"/>
</dbReference>
<dbReference type="EMBL" id="AY388961">
    <property type="protein sequence ID" value="AAQ90405.1"/>
    <property type="molecule type" value="mRNA"/>
</dbReference>
<dbReference type="EMBL" id="AABR06012736">
    <property type="status" value="NOT_ANNOTATED_CDS"/>
    <property type="molecule type" value="Genomic_DNA"/>
</dbReference>
<dbReference type="EMBL" id="AABR06012737">
    <property type="status" value="NOT_ANNOTATED_CDS"/>
    <property type="molecule type" value="Genomic_DNA"/>
</dbReference>
<dbReference type="EMBL" id="AABR06012738">
    <property type="status" value="NOT_ANNOTATED_CDS"/>
    <property type="molecule type" value="Genomic_DNA"/>
</dbReference>
<dbReference type="EMBL" id="AABR06012739">
    <property type="status" value="NOT_ANNOTATED_CDS"/>
    <property type="molecule type" value="Genomic_DNA"/>
</dbReference>
<dbReference type="EMBL" id="AABR06012740">
    <property type="status" value="NOT_ANNOTATED_CDS"/>
    <property type="molecule type" value="Genomic_DNA"/>
</dbReference>
<dbReference type="EMBL" id="AABR06012741">
    <property type="status" value="NOT_ANNOTATED_CDS"/>
    <property type="molecule type" value="Genomic_DNA"/>
</dbReference>
<dbReference type="EMBL" id="AABR06012742">
    <property type="status" value="NOT_ANNOTATED_CDS"/>
    <property type="molecule type" value="Genomic_DNA"/>
</dbReference>
<dbReference type="EMBL" id="AABR06012743">
    <property type="status" value="NOT_ANNOTATED_CDS"/>
    <property type="molecule type" value="Genomic_DNA"/>
</dbReference>
<dbReference type="EMBL" id="AABR06012744">
    <property type="status" value="NOT_ANNOTATED_CDS"/>
    <property type="molecule type" value="Genomic_DNA"/>
</dbReference>
<dbReference type="EMBL" id="AABR06012745">
    <property type="status" value="NOT_ANNOTATED_CDS"/>
    <property type="molecule type" value="Genomic_DNA"/>
</dbReference>
<dbReference type="EMBL" id="AABR06012746">
    <property type="status" value="NOT_ANNOTATED_CDS"/>
    <property type="molecule type" value="Genomic_DNA"/>
</dbReference>
<dbReference type="EMBL" id="AABR06012747">
    <property type="status" value="NOT_ANNOTATED_CDS"/>
    <property type="molecule type" value="Genomic_DNA"/>
</dbReference>
<dbReference type="EMBL" id="AABR06012748">
    <property type="status" value="NOT_ANNOTATED_CDS"/>
    <property type="molecule type" value="Genomic_DNA"/>
</dbReference>
<dbReference type="EMBL" id="AABR06012749">
    <property type="status" value="NOT_ANNOTATED_CDS"/>
    <property type="molecule type" value="Genomic_DNA"/>
</dbReference>
<dbReference type="EMBL" id="AABR06012750">
    <property type="status" value="NOT_ANNOTATED_CDS"/>
    <property type="molecule type" value="Genomic_DNA"/>
</dbReference>
<dbReference type="EMBL" id="AABR06012751">
    <property type="status" value="NOT_ANNOTATED_CDS"/>
    <property type="molecule type" value="Genomic_DNA"/>
</dbReference>
<dbReference type="EMBL" id="AABR06012752">
    <property type="status" value="NOT_ANNOTATED_CDS"/>
    <property type="molecule type" value="Genomic_DNA"/>
</dbReference>
<dbReference type="EMBL" id="AABR06012753">
    <property type="status" value="NOT_ANNOTATED_CDS"/>
    <property type="molecule type" value="Genomic_DNA"/>
</dbReference>
<dbReference type="EMBL" id="AABR06012754">
    <property type="status" value="NOT_ANNOTATED_CDS"/>
    <property type="molecule type" value="Genomic_DNA"/>
</dbReference>
<dbReference type="EMBL" id="AABR06012755">
    <property type="status" value="NOT_ANNOTATED_CDS"/>
    <property type="molecule type" value="Genomic_DNA"/>
</dbReference>
<dbReference type="EMBL" id="AABR06012756">
    <property type="status" value="NOT_ANNOTATED_CDS"/>
    <property type="molecule type" value="Genomic_DNA"/>
</dbReference>
<dbReference type="EMBL" id="AABR06012757">
    <property type="status" value="NOT_ANNOTATED_CDS"/>
    <property type="molecule type" value="Genomic_DNA"/>
</dbReference>
<dbReference type="EMBL" id="AABR06012758">
    <property type="status" value="NOT_ANNOTATED_CDS"/>
    <property type="molecule type" value="Genomic_DNA"/>
</dbReference>
<dbReference type="EMBL" id="AABR06012759">
    <property type="status" value="NOT_ANNOTATED_CDS"/>
    <property type="molecule type" value="Genomic_DNA"/>
</dbReference>
<dbReference type="EMBL" id="AABR06012760">
    <property type="status" value="NOT_ANNOTATED_CDS"/>
    <property type="molecule type" value="Genomic_DNA"/>
</dbReference>
<dbReference type="EMBL" id="L27059">
    <property type="protein sequence ID" value="AAA56857.1"/>
    <property type="molecule type" value="mRNA"/>
</dbReference>
<dbReference type="EMBL" id="L27060">
    <property type="protein sequence ID" value="AAC26969.1"/>
    <property type="molecule type" value="mRNA"/>
</dbReference>
<dbReference type="PIR" id="B53109">
    <property type="entry name" value="B53109"/>
</dbReference>
<dbReference type="PIR" id="I61259">
    <property type="entry name" value="I61259"/>
</dbReference>
<dbReference type="RefSeq" id="NP_001106799.1">
    <property type="nucleotide sequence ID" value="NM_001113328.1"/>
</dbReference>
<dbReference type="RefSeq" id="NP_001106800.1">
    <molecule id="P14270-4"/>
    <property type="nucleotide sequence ID" value="NM_001113329.2"/>
</dbReference>
<dbReference type="RefSeq" id="NP_001106803.1">
    <molecule id="P14270-8"/>
    <property type="nucleotide sequence ID" value="NM_001113332.2"/>
</dbReference>
<dbReference type="RefSeq" id="NP_001106805.1">
    <molecule id="P14270-9"/>
    <property type="nucleotide sequence ID" value="NM_001113334.2"/>
</dbReference>
<dbReference type="RefSeq" id="NP_058728.1">
    <molecule id="P14270-1"/>
    <property type="nucleotide sequence ID" value="NM_017032.2"/>
</dbReference>
<dbReference type="RefSeq" id="XP_008758943.1">
    <molecule id="P14270-6"/>
    <property type="nucleotide sequence ID" value="XM_008760721.3"/>
</dbReference>
<dbReference type="RefSeq" id="XP_008758944.1">
    <molecule id="P14270-7"/>
    <property type="nucleotide sequence ID" value="XM_008760722.4"/>
</dbReference>
<dbReference type="RefSeq" id="XP_008758945.1">
    <molecule id="P14270-3"/>
    <property type="nucleotide sequence ID" value="XM_008760723.3"/>
</dbReference>
<dbReference type="RefSeq" id="XP_038957661.1">
    <molecule id="P14270-4"/>
    <property type="nucleotide sequence ID" value="XM_039101733.2"/>
</dbReference>
<dbReference type="RefSeq" id="XP_063137368.1">
    <molecule id="P14270-4"/>
    <property type="nucleotide sequence ID" value="XM_063281298.1"/>
</dbReference>
<dbReference type="RefSeq" id="XP_063137369.1">
    <molecule id="P14270-4"/>
    <property type="nucleotide sequence ID" value="XM_063281299.1"/>
</dbReference>
<dbReference type="RefSeq" id="XP_063137370.1">
    <molecule id="P14270-4"/>
    <property type="nucleotide sequence ID" value="XM_063281300.1"/>
</dbReference>
<dbReference type="RefSeq" id="XP_063137371.1">
    <molecule id="P14270-4"/>
    <property type="nucleotide sequence ID" value="XM_063281301.1"/>
</dbReference>
<dbReference type="RefSeq" id="XP_063137372.1">
    <molecule id="P14270-4"/>
    <property type="nucleotide sequence ID" value="XM_063281302.1"/>
</dbReference>
<dbReference type="SMR" id="P14270"/>
<dbReference type="BioGRID" id="246765">
    <property type="interactions" value="5"/>
</dbReference>
<dbReference type="CORUM" id="P14270"/>
<dbReference type="FunCoup" id="P14270">
    <property type="interactions" value="977"/>
</dbReference>
<dbReference type="IntAct" id="P14270">
    <property type="interactions" value="3"/>
</dbReference>
<dbReference type="MINT" id="P14270"/>
<dbReference type="STRING" id="10116.ENSRNOP00000015138"/>
<dbReference type="BindingDB" id="P14270"/>
<dbReference type="ChEMBL" id="CHEMBL2712"/>
<dbReference type="DrugCentral" id="P14270"/>
<dbReference type="iPTMnet" id="P14270"/>
<dbReference type="PhosphoSitePlus" id="P14270"/>
<dbReference type="PaxDb" id="10116-ENSRNOP00000067171"/>
<dbReference type="Ensembl" id="ENSRNOT00000066384.5">
    <molecule id="P14270-9"/>
    <property type="protein sequence ID" value="ENSRNOP00000063446.2"/>
    <property type="gene ID" value="ENSRNOG00000042536.5"/>
</dbReference>
<dbReference type="Ensembl" id="ENSRNOT00000067546.4">
    <molecule id="P14270-7"/>
    <property type="protein sequence ID" value="ENSRNOP00000062384.2"/>
    <property type="gene ID" value="ENSRNOG00000042536.5"/>
</dbReference>
<dbReference type="Ensembl" id="ENSRNOT00000110594.1">
    <molecule id="P14270-4"/>
    <property type="protein sequence ID" value="ENSRNOP00000076534.1"/>
    <property type="gene ID" value="ENSRNOG00000042536.5"/>
</dbReference>
<dbReference type="Ensembl" id="ENSRNOT00000111781.1">
    <molecule id="P14270-6"/>
    <property type="protein sequence ID" value="ENSRNOP00000094176.1"/>
    <property type="gene ID" value="ENSRNOG00000042536.5"/>
</dbReference>
<dbReference type="Ensembl" id="ENSRNOT00000113369.1">
    <molecule id="P14270-8"/>
    <property type="protein sequence ID" value="ENSRNOP00000093090.1"/>
    <property type="gene ID" value="ENSRNOG00000042536.5"/>
</dbReference>
<dbReference type="GeneID" id="24627"/>
<dbReference type="KEGG" id="rno:24627"/>
<dbReference type="AGR" id="RGD:3281"/>
<dbReference type="CTD" id="5144"/>
<dbReference type="RGD" id="3281">
    <property type="gene designation" value="Pde4d"/>
</dbReference>
<dbReference type="VEuPathDB" id="HostDB:ENSRNOG00000042536"/>
<dbReference type="eggNOG" id="KOG3689">
    <property type="taxonomic scope" value="Eukaryota"/>
</dbReference>
<dbReference type="GeneTree" id="ENSGT00940000155674"/>
<dbReference type="HOGENOM" id="CLU_005940_5_3_1"/>
<dbReference type="InParanoid" id="P14270"/>
<dbReference type="OMA" id="KEQPPCA"/>
<dbReference type="OrthoDB" id="31248at9989"/>
<dbReference type="PhylomeDB" id="P14270"/>
<dbReference type="BRENDA" id="3.1.4.53">
    <property type="organism ID" value="5301"/>
</dbReference>
<dbReference type="Reactome" id="R-RNO-180024">
    <property type="pathway name" value="DARPP-32 events"/>
</dbReference>
<dbReference type="Reactome" id="R-RNO-418555">
    <property type="pathway name" value="G alpha (s) signalling events"/>
</dbReference>
<dbReference type="Reactome" id="R-RNO-9860927">
    <property type="pathway name" value="Turbulent (oscillatory, disturbed) flow shear stress activates signaling by PIEZO1 and integrins in endothelial cells"/>
</dbReference>
<dbReference type="SABIO-RK" id="P14270"/>
<dbReference type="UniPathway" id="UPA00762">
    <property type="reaction ID" value="UER00747"/>
</dbReference>
<dbReference type="PRO" id="PR:P14270"/>
<dbReference type="Proteomes" id="UP000002494">
    <property type="component" value="Chromosome 2"/>
</dbReference>
<dbReference type="Bgee" id="ENSRNOG00000042536">
    <property type="expression patterns" value="Expressed in quadriceps femoris and 18 other cell types or tissues"/>
</dbReference>
<dbReference type="ExpressionAtlas" id="P14270">
    <property type="expression patterns" value="baseline and differential"/>
</dbReference>
<dbReference type="GO" id="GO:0034704">
    <property type="term" value="C:calcium channel complex"/>
    <property type="evidence" value="ECO:0000266"/>
    <property type="project" value="RGD"/>
</dbReference>
<dbReference type="GO" id="GO:0005813">
    <property type="term" value="C:centrosome"/>
    <property type="evidence" value="ECO:0000314"/>
    <property type="project" value="RGD"/>
</dbReference>
<dbReference type="GO" id="GO:0005829">
    <property type="term" value="C:cytosol"/>
    <property type="evidence" value="ECO:0000266"/>
    <property type="project" value="RGD"/>
</dbReference>
<dbReference type="GO" id="GO:0016020">
    <property type="term" value="C:membrane"/>
    <property type="evidence" value="ECO:0000266"/>
    <property type="project" value="RGD"/>
</dbReference>
<dbReference type="GO" id="GO:0030016">
    <property type="term" value="C:myofibril"/>
    <property type="evidence" value="ECO:0000314"/>
    <property type="project" value="RGD"/>
</dbReference>
<dbReference type="GO" id="GO:0034705">
    <property type="term" value="C:potassium channel complex"/>
    <property type="evidence" value="ECO:0000266"/>
    <property type="project" value="RGD"/>
</dbReference>
<dbReference type="GO" id="GO:0032991">
    <property type="term" value="C:protein-containing complex"/>
    <property type="evidence" value="ECO:0000314"/>
    <property type="project" value="RGD"/>
</dbReference>
<dbReference type="GO" id="GO:0005891">
    <property type="term" value="C:voltage-gated calcium channel complex"/>
    <property type="evidence" value="ECO:0000266"/>
    <property type="project" value="RGD"/>
</dbReference>
<dbReference type="GO" id="GO:0004115">
    <property type="term" value="F:3',5'-cyclic-AMP phosphodiesterase activity"/>
    <property type="evidence" value="ECO:0000266"/>
    <property type="project" value="RGD"/>
</dbReference>
<dbReference type="GO" id="GO:0047555">
    <property type="term" value="F:3',5'-cyclic-GMP phosphodiesterase activity"/>
    <property type="evidence" value="ECO:0000318"/>
    <property type="project" value="GO_Central"/>
</dbReference>
<dbReference type="GO" id="GO:0004114">
    <property type="term" value="F:3',5'-cyclic-nucleotide phosphodiesterase activity"/>
    <property type="evidence" value="ECO:0000266"/>
    <property type="project" value="RGD"/>
</dbReference>
<dbReference type="GO" id="GO:0051117">
    <property type="term" value="F:ATPase binding"/>
    <property type="evidence" value="ECO:0000266"/>
    <property type="project" value="RGD"/>
</dbReference>
<dbReference type="GO" id="GO:0031698">
    <property type="term" value="F:beta-2 adrenergic receptor binding"/>
    <property type="evidence" value="ECO:0000353"/>
    <property type="project" value="BHF-UCL"/>
</dbReference>
<dbReference type="GO" id="GO:0005246">
    <property type="term" value="F:calcium channel regulator activity"/>
    <property type="evidence" value="ECO:0000266"/>
    <property type="project" value="RGD"/>
</dbReference>
<dbReference type="GO" id="GO:0030552">
    <property type="term" value="F:cAMP binding"/>
    <property type="evidence" value="ECO:0000266"/>
    <property type="project" value="RGD"/>
</dbReference>
<dbReference type="GO" id="GO:0004112">
    <property type="term" value="F:cyclic-nucleotide phosphodiesterase activity"/>
    <property type="evidence" value="ECO:0000314"/>
    <property type="project" value="RGD"/>
</dbReference>
<dbReference type="GO" id="GO:0019899">
    <property type="term" value="F:enzyme binding"/>
    <property type="evidence" value="ECO:0000353"/>
    <property type="project" value="BHF-UCL"/>
</dbReference>
<dbReference type="GO" id="GO:1901363">
    <property type="term" value="F:heterocyclic compound binding"/>
    <property type="evidence" value="ECO:0000266"/>
    <property type="project" value="RGD"/>
</dbReference>
<dbReference type="GO" id="GO:0046872">
    <property type="term" value="F:metal ion binding"/>
    <property type="evidence" value="ECO:0007669"/>
    <property type="project" value="UniProtKB-KW"/>
</dbReference>
<dbReference type="GO" id="GO:0097110">
    <property type="term" value="F:scaffold protein binding"/>
    <property type="evidence" value="ECO:0000266"/>
    <property type="project" value="RGD"/>
</dbReference>
<dbReference type="GO" id="GO:0030545">
    <property type="term" value="F:signaling receptor regulator activity"/>
    <property type="evidence" value="ECO:0000315"/>
    <property type="project" value="BHF-UCL"/>
</dbReference>
<dbReference type="GO" id="GO:0044325">
    <property type="term" value="F:transmembrane transporter binding"/>
    <property type="evidence" value="ECO:0000266"/>
    <property type="project" value="RGD"/>
</dbReference>
<dbReference type="GO" id="GO:0071875">
    <property type="term" value="P:adrenergic receptor signaling pathway"/>
    <property type="evidence" value="ECO:0000315"/>
    <property type="project" value="BHF-UCL"/>
</dbReference>
<dbReference type="GO" id="GO:0006198">
    <property type="term" value="P:cAMP catabolic process"/>
    <property type="evidence" value="ECO:0007669"/>
    <property type="project" value="UniProtKB-UniPathway"/>
</dbReference>
<dbReference type="GO" id="GO:0019933">
    <property type="term" value="P:cAMP-mediated signaling"/>
    <property type="evidence" value="ECO:0000318"/>
    <property type="project" value="GO_Central"/>
</dbReference>
<dbReference type="GO" id="GO:0141156">
    <property type="term" value="P:cAMP/PKA signal transduction"/>
    <property type="evidence" value="ECO:0000266"/>
    <property type="project" value="RGD"/>
</dbReference>
<dbReference type="GO" id="GO:0071320">
    <property type="term" value="P:cellular response to cAMP"/>
    <property type="evidence" value="ECO:0000266"/>
    <property type="project" value="RGD"/>
</dbReference>
<dbReference type="GO" id="GO:0071872">
    <property type="term" value="P:cellular response to epinephrine stimulus"/>
    <property type="evidence" value="ECO:0000266"/>
    <property type="project" value="RGD"/>
</dbReference>
<dbReference type="GO" id="GO:0071372">
    <property type="term" value="P:cellular response to follicle-stimulating hormone stimulus"/>
    <property type="evidence" value="ECO:0000266"/>
    <property type="project" value="RGD"/>
</dbReference>
<dbReference type="GO" id="GO:0071222">
    <property type="term" value="P:cellular response to lipopolysaccharide"/>
    <property type="evidence" value="ECO:0000266"/>
    <property type="project" value="RGD"/>
</dbReference>
<dbReference type="GO" id="GO:0061028">
    <property type="term" value="P:establishment of endothelial barrier"/>
    <property type="evidence" value="ECO:0000314"/>
    <property type="project" value="UniProtKB"/>
</dbReference>
<dbReference type="GO" id="GO:0030324">
    <property type="term" value="P:lung development"/>
    <property type="evidence" value="ECO:0000270"/>
    <property type="project" value="RGD"/>
</dbReference>
<dbReference type="GO" id="GO:0007613">
    <property type="term" value="P:memory"/>
    <property type="evidence" value="ECO:0000315"/>
    <property type="project" value="RGD"/>
</dbReference>
<dbReference type="GO" id="GO:0035264">
    <property type="term" value="P:multicellular organism growth"/>
    <property type="evidence" value="ECO:0000266"/>
    <property type="project" value="RGD"/>
</dbReference>
<dbReference type="GO" id="GO:0106072">
    <property type="term" value="P:negative regulation of adenylate cyclase-activating G protein-coupled receptor signaling pathway"/>
    <property type="evidence" value="ECO:0000266"/>
    <property type="project" value="RGD"/>
</dbReference>
<dbReference type="GO" id="GO:0045822">
    <property type="term" value="P:negative regulation of heart contraction"/>
    <property type="evidence" value="ECO:0000266"/>
    <property type="project" value="RGD"/>
</dbReference>
<dbReference type="GO" id="GO:1901898">
    <property type="term" value="P:negative regulation of relaxation of cardiac muscle"/>
    <property type="evidence" value="ECO:0000266"/>
    <property type="project" value="RGD"/>
</dbReference>
<dbReference type="GO" id="GO:0030593">
    <property type="term" value="P:neutrophil chemotaxis"/>
    <property type="evidence" value="ECO:0000266"/>
    <property type="project" value="RGD"/>
</dbReference>
<dbReference type="GO" id="GO:1990266">
    <property type="term" value="P:neutrophil migration"/>
    <property type="evidence" value="ECO:0000266"/>
    <property type="project" value="RGD"/>
</dbReference>
<dbReference type="GO" id="GO:0001542">
    <property type="term" value="P:ovulation from ovarian follicle"/>
    <property type="evidence" value="ECO:0000266"/>
    <property type="project" value="RGD"/>
</dbReference>
<dbReference type="GO" id="GO:0022409">
    <property type="term" value="P:positive regulation of cell-cell adhesion"/>
    <property type="evidence" value="ECO:0000315"/>
    <property type="project" value="RGD"/>
</dbReference>
<dbReference type="GO" id="GO:0010460">
    <property type="term" value="P:positive regulation of heart rate"/>
    <property type="evidence" value="ECO:0000315"/>
    <property type="project" value="BHF-UCL"/>
</dbReference>
<dbReference type="GO" id="GO:0032743">
    <property type="term" value="P:positive regulation of interleukin-2 production"/>
    <property type="evidence" value="ECO:0000266"/>
    <property type="project" value="RGD"/>
</dbReference>
<dbReference type="GO" id="GO:0032754">
    <property type="term" value="P:positive regulation of interleukin-5 production"/>
    <property type="evidence" value="ECO:0000266"/>
    <property type="project" value="RGD"/>
</dbReference>
<dbReference type="GO" id="GO:0014911">
    <property type="term" value="P:positive regulation of smooth muscle cell migration"/>
    <property type="evidence" value="ECO:0000315"/>
    <property type="project" value="RGD"/>
</dbReference>
<dbReference type="GO" id="GO:0048661">
    <property type="term" value="P:positive regulation of smooth muscle cell proliferation"/>
    <property type="evidence" value="ECO:0000315"/>
    <property type="project" value="RGD"/>
</dbReference>
<dbReference type="GO" id="GO:0032729">
    <property type="term" value="P:positive regulation of type II interferon production"/>
    <property type="evidence" value="ECO:0000266"/>
    <property type="project" value="RGD"/>
</dbReference>
<dbReference type="GO" id="GO:0065003">
    <property type="term" value="P:protein-containing complex assembly"/>
    <property type="evidence" value="ECO:0000314"/>
    <property type="project" value="RGD"/>
</dbReference>
<dbReference type="GO" id="GO:1902514">
    <property type="term" value="P:regulation of calcium ion transmembrane transport via high voltage-gated calcium channel"/>
    <property type="evidence" value="ECO:0000266"/>
    <property type="project" value="RGD"/>
</dbReference>
<dbReference type="GO" id="GO:0141161">
    <property type="term" value="P:regulation of cAMP/PKA signal transduction"/>
    <property type="evidence" value="ECO:0000315"/>
    <property type="project" value="RGD"/>
</dbReference>
<dbReference type="GO" id="GO:0086004">
    <property type="term" value="P:regulation of cardiac muscle cell contraction"/>
    <property type="evidence" value="ECO:0000315"/>
    <property type="project" value="BHF-UCL"/>
</dbReference>
<dbReference type="GO" id="GO:1901844">
    <property type="term" value="P:regulation of cell communication by electrical coupling involved in cardiac conduction"/>
    <property type="evidence" value="ECO:0000266"/>
    <property type="project" value="RGD"/>
</dbReference>
<dbReference type="GO" id="GO:0002027">
    <property type="term" value="P:regulation of heart rate"/>
    <property type="evidence" value="ECO:0000266"/>
    <property type="project" value="RGD"/>
</dbReference>
<dbReference type="GO" id="GO:0010880">
    <property type="term" value="P:regulation of release of sequestered calcium ion into cytosol by sarcoplasmic reticulum"/>
    <property type="evidence" value="ECO:0000266"/>
    <property type="project" value="RGD"/>
</dbReference>
<dbReference type="GO" id="GO:0006939">
    <property type="term" value="P:smooth muscle contraction"/>
    <property type="evidence" value="ECO:0000266"/>
    <property type="project" value="RGD"/>
</dbReference>
<dbReference type="GO" id="GO:0050852">
    <property type="term" value="P:T cell receptor signaling pathway"/>
    <property type="evidence" value="ECO:0000266"/>
    <property type="project" value="RGD"/>
</dbReference>
<dbReference type="FunFam" id="1.10.1300.10:FF:000001">
    <property type="entry name" value="Phosphodiesterase"/>
    <property type="match status" value="1"/>
</dbReference>
<dbReference type="Gene3D" id="1.10.1300.10">
    <property type="entry name" value="3'5'-cyclic nucleotide phosphodiesterase, catalytic domain"/>
    <property type="match status" value="1"/>
</dbReference>
<dbReference type="InterPro" id="IPR040844">
    <property type="entry name" value="PDE4_UCR"/>
</dbReference>
<dbReference type="InterPro" id="IPR023088">
    <property type="entry name" value="PDEase"/>
</dbReference>
<dbReference type="InterPro" id="IPR002073">
    <property type="entry name" value="PDEase_catalytic_dom"/>
</dbReference>
<dbReference type="InterPro" id="IPR036971">
    <property type="entry name" value="PDEase_catalytic_dom_sf"/>
</dbReference>
<dbReference type="InterPro" id="IPR023174">
    <property type="entry name" value="PDEase_CS"/>
</dbReference>
<dbReference type="PANTHER" id="PTHR11347">
    <property type="entry name" value="CYCLIC NUCLEOTIDE PHOSPHODIESTERASE"/>
    <property type="match status" value="1"/>
</dbReference>
<dbReference type="Pfam" id="PF18100">
    <property type="entry name" value="PDE4_UCR"/>
    <property type="match status" value="1"/>
</dbReference>
<dbReference type="Pfam" id="PF00233">
    <property type="entry name" value="PDEase_I"/>
    <property type="match status" value="1"/>
</dbReference>
<dbReference type="PRINTS" id="PR00387">
    <property type="entry name" value="PDIESTERASE1"/>
</dbReference>
<dbReference type="SUPFAM" id="SSF101447">
    <property type="entry name" value="Formin homology 2 domain (FH2 domain)"/>
    <property type="match status" value="1"/>
</dbReference>
<dbReference type="SUPFAM" id="SSF109604">
    <property type="entry name" value="HD-domain/PDEase-like"/>
    <property type="match status" value="1"/>
</dbReference>
<dbReference type="PROSITE" id="PS00126">
    <property type="entry name" value="PDEASE_I_1"/>
    <property type="match status" value="1"/>
</dbReference>
<dbReference type="PROSITE" id="PS51845">
    <property type="entry name" value="PDEASE_I_2"/>
    <property type="match status" value="1"/>
</dbReference>
<protein>
    <recommendedName>
        <fullName evidence="17">3',5'-cyclic-AMP phosphodiesterase 4D</fullName>
        <ecNumber>3.1.4.53</ecNumber>
    </recommendedName>
    <alternativeName>
        <fullName>DPDE3</fullName>
    </alternativeName>
    <alternativeName>
        <fullName evidence="17">cAMP-specific phosphodiesterase 4D</fullName>
    </alternativeName>
</protein>
<organism>
    <name type="scientific">Rattus norvegicus</name>
    <name type="common">Rat</name>
    <dbReference type="NCBI Taxonomy" id="10116"/>
    <lineage>
        <taxon>Eukaryota</taxon>
        <taxon>Metazoa</taxon>
        <taxon>Chordata</taxon>
        <taxon>Craniata</taxon>
        <taxon>Vertebrata</taxon>
        <taxon>Euteleostomi</taxon>
        <taxon>Mammalia</taxon>
        <taxon>Eutheria</taxon>
        <taxon>Euarchontoglires</taxon>
        <taxon>Glires</taxon>
        <taxon>Rodentia</taxon>
        <taxon>Myomorpha</taxon>
        <taxon>Muroidea</taxon>
        <taxon>Muridae</taxon>
        <taxon>Murinae</taxon>
        <taxon>Rattus</taxon>
    </lineage>
</organism>
<evidence type="ECO:0000250" key="1"/>
<evidence type="ECO:0000250" key="2">
    <source>
        <dbReference type="UniProtKB" id="Q07343"/>
    </source>
</evidence>
<evidence type="ECO:0000250" key="3">
    <source>
        <dbReference type="UniProtKB" id="Q08499"/>
    </source>
</evidence>
<evidence type="ECO:0000255" key="4">
    <source>
        <dbReference type="PROSITE-ProRule" id="PRU01192"/>
    </source>
</evidence>
<evidence type="ECO:0000256" key="5">
    <source>
        <dbReference type="SAM" id="MobiDB-lite"/>
    </source>
</evidence>
<evidence type="ECO:0000269" key="6">
    <source>
    </source>
</evidence>
<evidence type="ECO:0000269" key="7">
    <source>
    </source>
</evidence>
<evidence type="ECO:0000269" key="8">
    <source>
    </source>
</evidence>
<evidence type="ECO:0000269" key="9">
    <source>
    </source>
</evidence>
<evidence type="ECO:0000269" key="10">
    <source>
    </source>
</evidence>
<evidence type="ECO:0000303" key="11">
    <source>
    </source>
</evidence>
<evidence type="ECO:0000303" key="12">
    <source>
    </source>
</evidence>
<evidence type="ECO:0000303" key="13">
    <source>
    </source>
</evidence>
<evidence type="ECO:0000303" key="14">
    <source>
    </source>
</evidence>
<evidence type="ECO:0000303" key="15">
    <source>
    </source>
</evidence>
<evidence type="ECO:0000303" key="16">
    <source ref="9"/>
</evidence>
<evidence type="ECO:0000305" key="17"/>
<evidence type="ECO:0007744" key="18">
    <source>
    </source>
</evidence>
<feature type="chain" id="PRO_0000198816" description="3',5'-cyclic-AMP phosphodiesterase 4D">
    <location>
        <begin position="1"/>
        <end position="803"/>
    </location>
</feature>
<feature type="domain" description="PDEase" evidence="4">
    <location>
        <begin position="381"/>
        <end position="710"/>
    </location>
</feature>
<feature type="region of interest" description="Disordered" evidence="5">
    <location>
        <begin position="1"/>
        <end position="103"/>
    </location>
</feature>
<feature type="region of interest" description="Disordered" evidence="5">
    <location>
        <begin position="338"/>
        <end position="358"/>
    </location>
</feature>
<feature type="region of interest" description="Disordered" evidence="5">
    <location>
        <begin position="705"/>
        <end position="724"/>
    </location>
</feature>
<feature type="region of interest" description="Disordered" evidence="5">
    <location>
        <begin position="732"/>
        <end position="803"/>
    </location>
</feature>
<feature type="compositionally biased region" description="Pro residues" evidence="5">
    <location>
        <begin position="58"/>
        <end position="85"/>
    </location>
</feature>
<feature type="compositionally biased region" description="Polar residues" evidence="5">
    <location>
        <begin position="757"/>
        <end position="768"/>
    </location>
</feature>
<feature type="compositionally biased region" description="Acidic residues" evidence="5">
    <location>
        <begin position="774"/>
        <end position="789"/>
    </location>
</feature>
<feature type="active site" description="Proton donor" evidence="2">
    <location>
        <position position="457"/>
    </location>
</feature>
<feature type="binding site" evidence="3">
    <location>
        <position position="457"/>
    </location>
    <ligand>
        <name>3',5'-cyclic AMP</name>
        <dbReference type="ChEBI" id="CHEBI:58165"/>
    </ligand>
</feature>
<feature type="binding site" evidence="3">
    <location>
        <position position="457"/>
    </location>
    <ligand>
        <name>AMP</name>
        <dbReference type="ChEBI" id="CHEBI:456215"/>
    </ligand>
</feature>
<feature type="binding site" evidence="3">
    <location>
        <position position="461"/>
    </location>
    <ligand>
        <name>Zn(2+)</name>
        <dbReference type="ChEBI" id="CHEBI:29105"/>
        <label>1</label>
    </ligand>
</feature>
<feature type="binding site" evidence="3">
    <location>
        <position position="497"/>
    </location>
    <ligand>
        <name>Zn(2+)</name>
        <dbReference type="ChEBI" id="CHEBI:29105"/>
        <label>1</label>
    </ligand>
</feature>
<feature type="binding site" evidence="3">
    <location>
        <position position="498"/>
    </location>
    <ligand>
        <name>AMP</name>
        <dbReference type="ChEBI" id="CHEBI:456215"/>
    </ligand>
</feature>
<feature type="binding site" evidence="3">
    <location>
        <position position="498"/>
    </location>
    <ligand>
        <name>Mg(2+)</name>
        <dbReference type="ChEBI" id="CHEBI:18420"/>
    </ligand>
</feature>
<feature type="binding site" evidence="2">
    <location>
        <position position="498"/>
    </location>
    <ligand>
        <name>Mn(2+)</name>
        <dbReference type="ChEBI" id="CHEBI:29035"/>
    </ligand>
</feature>
<feature type="binding site" evidence="3">
    <location>
        <position position="498"/>
    </location>
    <ligand>
        <name>Zn(2+)</name>
        <dbReference type="ChEBI" id="CHEBI:29105"/>
        <label>1</label>
    </ligand>
</feature>
<feature type="binding site" evidence="3">
    <location>
        <position position="498"/>
    </location>
    <ligand>
        <name>Zn(2+)</name>
        <dbReference type="ChEBI" id="CHEBI:29105"/>
        <label>2</label>
    </ligand>
</feature>
<feature type="binding site" evidence="3">
    <location>
        <position position="615"/>
    </location>
    <ligand>
        <name>AMP</name>
        <dbReference type="ChEBI" id="CHEBI:456215"/>
    </ligand>
</feature>
<feature type="binding site" evidence="3">
    <location>
        <position position="615"/>
    </location>
    <ligand>
        <name>Zn(2+)</name>
        <dbReference type="ChEBI" id="CHEBI:29105"/>
        <label>1</label>
    </ligand>
</feature>
<feature type="binding site" evidence="3">
    <location>
        <position position="618"/>
    </location>
    <ligand>
        <name>AMP</name>
        <dbReference type="ChEBI" id="CHEBI:456215"/>
    </ligand>
</feature>
<feature type="binding site" evidence="3">
    <location>
        <position position="666"/>
    </location>
    <ligand>
        <name>3',5'-cyclic AMP</name>
        <dbReference type="ChEBI" id="CHEBI:58165"/>
    </ligand>
</feature>
<feature type="binding site" evidence="3">
    <location>
        <position position="666"/>
    </location>
    <ligand>
        <name>AMP</name>
        <dbReference type="ChEBI" id="CHEBI:456215"/>
    </ligand>
</feature>
<feature type="binding site" evidence="3">
    <location>
        <position position="669"/>
    </location>
    <ligand>
        <name>3',5'-cyclic AMP</name>
        <dbReference type="ChEBI" id="CHEBI:58165"/>
    </ligand>
</feature>
<feature type="binding site" evidence="3">
    <location>
        <position position="669"/>
    </location>
    <ligand>
        <name>AMP</name>
        <dbReference type="ChEBI" id="CHEBI:456215"/>
    </ligand>
</feature>
<feature type="modified residue" description="Phosphoserine" evidence="18">
    <location>
        <position position="137"/>
    </location>
</feature>
<feature type="modified residue" description="Phosphoserine" evidence="3">
    <location>
        <position position="294"/>
    </location>
</feature>
<feature type="modified residue" description="Phosphoserine" evidence="3">
    <location>
        <position position="296"/>
    </location>
</feature>
<feature type="modified residue" description="Phosphoserine" evidence="3">
    <location>
        <position position="343"/>
    </location>
</feature>
<feature type="modified residue" description="Phosphoserine" evidence="3">
    <location>
        <position position="370"/>
    </location>
</feature>
<feature type="cross-link" description="Glycyl lysine isopeptide (Lys-Gly) (interchain with G-Cter in SUMO)" evidence="1">
    <location>
        <position position="382"/>
    </location>
</feature>
<feature type="splice variant" id="VSP_004582" description="In isoform 32." evidence="15">
    <location>
        <begin position="1"/>
        <end position="297"/>
    </location>
</feature>
<feature type="splice variant" id="VSP_012404" description="In isoform 6." evidence="11">
    <location>
        <begin position="1"/>
        <end position="286"/>
    </location>
</feature>
<feature type="splice variant" id="VSP_004581" description="In isoform 31." evidence="13 14 15">
    <original>MEAEGSSVPARAGSHEGSDSSGGAALKAPKHLWRHEQHHQYPLRQPQFRLLHPHHHLPPPPPPSPQPQLQPPPPPPLPPPPPPPGATRGRYASSGASRVRHRGYSDTERYLYCRAMDRTSYAVETGHRPGLKKSRMSWPSSFQGLRRFDVDNGTSAGRSPLDPMTSPGSGLILQANFVHSQRRESFLYRSDSDYDLSPKSMSRNSSIASDIHGDDLIVTPFAQVLASLRTVRNNFAALTNLQDRAPSKRSPMCNQPSINKATIT</original>
    <variation>MKEQPSCAGTGHPSMAGYGRMAPFELAGGPVKRLRTESPFPCLFA</variation>
    <location>
        <begin position="1"/>
        <end position="264"/>
    </location>
</feature>
<feature type="splice variant" id="VSP_053485" description="In isoform 5." evidence="12">
    <original>MEAEGSSVPARAGSHEGSDSSGGAALKAPKHLWRHEQHHQYPLRQPQFRLLHPHHHLPPPPPPSPQPQLQPPPPPPLPPPPPPPGATRGRYASSGASRVRHRGYSDTERYLYCRAMDRTSYAVETGHRPGLKKSRMSWPSSFQGLRR</original>
    <variation>MAQQTTSPDTLTVPEVDNPHVPNPWLNEDLVKSLRENLLQHEKSKTARKSVSPKLSPVISPRNSPRLLRRMLLSSNIPKQRRFTVAHTC</variation>
    <location>
        <begin position="1"/>
        <end position="147"/>
    </location>
</feature>
<feature type="splice variant" id="VSP_053486" description="In isoform 8." evidence="12">
    <original>MEAEGSSVPARAGSHEGSDSSGGAALKAPKHLWRHEQHHQYPLRQPQFRLLHPHHHLPPPPPPSPQPQLQPPPPPPLPPPPPPPGATRGRYASSGASRVRHRGYSDTERYLYCRAMDRTSYAVETGHRPGLKKSRMSWPSSFQGLRR</original>
    <variation>MAFVWDPLGVTVPGPSPRTRTRLRFSKSYS</variation>
    <location>
        <begin position="1"/>
        <end position="147"/>
    </location>
</feature>
<feature type="splice variant" id="VSP_012398" description="In isoform 33." evidence="14 15">
    <location>
        <begin position="1"/>
        <end position="131"/>
    </location>
</feature>
<feature type="splice variant" id="VSP_012402" description="In isoform 9." evidence="16">
    <location>
        <begin position="1"/>
        <end position="125"/>
    </location>
</feature>
<feature type="splice variant" id="VSP_012400" description="In isoform 7." evidence="11">
    <location>
        <begin position="1"/>
        <end position="56"/>
    </location>
</feature>
<feature type="splice variant" id="VSP_012401" description="In isoform 7." evidence="11">
    <original>LPPPPPPSPQPQLQPPPPPPLPPPPPPPGATRGRYASSGASRVRHRGYSDTERYLYCRAMDRTSYAVETGHRPGLKKSRMSWPSSFQGLRR</original>
    <variation>MERNTCDVLSRSKSASEETLHSCNDEEDPFRGMEPYLVRRLSSRSIQLPPLAFRQLEQTDLRSESENIPRPTSLPLKILPLIAVTSADSTG</variation>
    <location>
        <begin position="57"/>
        <end position="147"/>
    </location>
</feature>
<feature type="splice variant" id="VSP_012403" description="In isoform 9." evidence="16">
    <original>GHRPGLKKSRMSWPSSFQGLRR</original>
    <variation>MSIIMKPRSRSTSSLRTTEAVC</variation>
    <location>
        <begin position="126"/>
        <end position="147"/>
    </location>
</feature>
<feature type="splice variant" id="VSP_012399" description="In isoform 33." evidence="14 15">
    <original>KKSRMSWPSSFQGLRR</original>
    <variation>MMHVNTFPFRRHSWIC</variation>
    <location>
        <begin position="132"/>
        <end position="147"/>
    </location>
</feature>
<feature type="splice variant" id="VSP_012405" description="In isoform 6." evidence="11">
    <original>ETLQTRHSVSEMASN</original>
    <variation>MPEANYLLSVSWGYI</variation>
    <location>
        <begin position="287"/>
        <end position="301"/>
    </location>
</feature>
<feature type="sequence conflict" description="In Ref. 12; AAA56857." evidence="17" ref="12">
    <original>A</original>
    <variation>N</variation>
    <location>
        <position position="226"/>
    </location>
</feature>
<feature type="sequence conflict" description="In Ref. 9; AAQ90405." evidence="17" ref="9">
    <original>S</original>
    <variation>P</variation>
    <location>
        <position position="357"/>
    </location>
</feature>
<feature type="sequence conflict" description="In Ref. 4; AAA18924/AAA18925." evidence="17" ref="4">
    <location>
        <begin position="480"/>
        <end position="486"/>
    </location>
</feature>
<feature type="sequence conflict" description="In Ref. 12; AAC26969." evidence="17" ref="12">
    <original>G</original>
    <variation>E</variation>
    <location>
        <position position="641"/>
    </location>
</feature>
<feature type="sequence conflict" description="In Ref. 12; AAA56857." evidence="17" ref="12">
    <original>C</original>
    <variation>Y</variation>
    <location>
        <position position="757"/>
    </location>
</feature>
<feature type="modified residue" description="Phosphoserine" evidence="18">
    <location sequence="P14270-8">
        <position position="52"/>
    </location>
</feature>
<feature type="modified residue" description="Phosphoserine" evidence="18">
    <location sequence="P14270-8">
        <position position="56"/>
    </location>
</feature>
<proteinExistence type="evidence at protein level"/>
<comment type="function">
    <text>Hydrolyzes the second messenger cAMP, which is a key regulator of many important physiological processes.</text>
</comment>
<comment type="catalytic activity">
    <reaction evidence="3">
        <text>3',5'-cyclic AMP + H2O = AMP + H(+)</text>
        <dbReference type="Rhea" id="RHEA:25277"/>
        <dbReference type="ChEBI" id="CHEBI:15377"/>
        <dbReference type="ChEBI" id="CHEBI:15378"/>
        <dbReference type="ChEBI" id="CHEBI:58165"/>
        <dbReference type="ChEBI" id="CHEBI:456215"/>
        <dbReference type="EC" id="3.1.4.53"/>
    </reaction>
    <physiologicalReaction direction="left-to-right" evidence="3">
        <dbReference type="Rhea" id="RHEA:25278"/>
    </physiologicalReaction>
</comment>
<comment type="cofactor">
    <cofactor evidence="3">
        <name>Zn(2+)</name>
        <dbReference type="ChEBI" id="CHEBI:29105"/>
    </cofactor>
    <text evidence="3">Binds 2 divalent metal cations per subunit. Site 1 may preferentially bind zinc ions.</text>
</comment>
<comment type="cofactor">
    <cofactor evidence="3">
        <name>Mg(2+)</name>
        <dbReference type="ChEBI" id="CHEBI:18420"/>
    </cofactor>
    <cofactor evidence="2">
        <name>Mn(2+)</name>
        <dbReference type="ChEBI" id="CHEBI:29035"/>
    </cofactor>
    <text evidence="3">Binds 2 divalent metal cations per subunit. Site 2 has a preference for magnesium and/or manganese ions.</text>
</comment>
<comment type="activity regulation">
    <text evidence="1 9">Activated by phosphatidic acid (By similarity). Inhibited by rolipram.</text>
</comment>
<comment type="biophysicochemical properties">
    <kinetics>
        <Vmax evidence="9">18.0 pmol/min/mg enzyme for cAMP (in the absence of follicle-stimulating hormone (FSH))</Vmax>
        <Vmax evidence="9">5.0 pmol/min/mg enzyme for cAMP (in the presence of follicle-stimulating hormone (FSH))</Vmax>
    </kinetics>
</comment>
<comment type="pathway">
    <text>Purine metabolism; 3',5'-cyclic AMP degradation; AMP from 3',5'-cyclic AMP: step 1/1.</text>
</comment>
<comment type="subunit">
    <text evidence="1 7 8">Homodimer for the long isoforms. Isoforms with truncated N-termini are monomeric. Binds ARRB2. Isoform 33 is part of a ternary complex containing PRKAR2A, PRKAR2B and AKAP9. Identified in a complex composed of RYR1, PDE4D, PKA, FKBP1A and protein phosphatase 1 (PP1) (By similarity). Interacts with PDE4DIP. Isoform 5 interacts (via N-terminal region) with SHANK2 (via proline-rich region); the interaction is increased in a PKA-dependent manner. Isoform 33, isoform 4, isoform 7, isoform 8 and isoform 9 but not isoform 32 and isoform 6 interact with SHANK2. Isoform 31 interacts weakly with SHANK2.</text>
</comment>
<comment type="interaction">
    <interactant intactId="EBI-8333209">
        <id>P14270</id>
    </interactant>
    <interactant intactId="EBI-991009">
        <id>P08588</id>
        <label>ADRB1</label>
    </interactant>
    <organismsDiffer>true</organismsDiffer>
    <experiments>2</experiments>
</comment>
<comment type="interaction">
    <interactant intactId="EBI-9032440">
        <id>P14270-8</id>
    </interactant>
    <interactant intactId="EBI-397902">
        <id>Q9QX74</id>
        <label>Shank2</label>
    </interactant>
    <organismsDiffer>false</organismsDiffer>
    <experiments>4</experiments>
</comment>
<comment type="subcellular location">
    <subcellularLocation>
        <location>Apical cell membrane</location>
    </subcellularLocation>
    <subcellularLocation>
        <location>Cytoplasm</location>
    </subcellularLocation>
    <subcellularLocation>
        <location>Membrane</location>
    </subcellularLocation>
    <subcellularLocation>
        <location>Cytoplasm</location>
        <location>Cytoskeleton</location>
    </subcellularLocation>
    <subcellularLocation>
        <location>Cytoplasm</location>
        <location>Cytoskeleton</location>
        <location>Microtubule organizing center</location>
        <location>Centrosome</location>
    </subcellularLocation>
    <text>Found in the soluble fraction, associated with membranes, and associated with the cytoskeleton and the centrosome. Colocalized with SHANK2 to the apical membrane of colonic crypt cells.</text>
</comment>
<comment type="alternative products">
    <event type="alternative splicing"/>
    <isoform>
        <id>P14270-5</id>
        <name>4</name>
        <name>PDE4D4</name>
        <sequence type="displayed"/>
    </isoform>
    <isoform>
        <id>P14270-1</id>
        <name>33</name>
        <name>PDE4D3</name>
        <name>PDE3.3</name>
        <sequence type="described" ref="VSP_012398 VSP_012399"/>
    </isoform>
    <isoform>
        <id>P14270-2</id>
        <name>31</name>
        <name>PDE3.1</name>
        <sequence type="described" ref="VSP_004581"/>
    </isoform>
    <isoform>
        <id>P14270-3</id>
        <name>32</name>
        <name>PDE3.2</name>
        <sequence type="described" ref="VSP_004582"/>
    </isoform>
    <isoform>
        <id>P14270-8</id>
        <name>5</name>
        <name>PDE4D5</name>
        <sequence type="described" ref="VSP_053485"/>
    </isoform>
    <isoform>
        <id>P14270-7</id>
        <name>6</name>
        <name>PDE4D6</name>
        <sequence type="described" ref="VSP_012404 VSP_012405"/>
    </isoform>
    <isoform>
        <id>P14270-4</id>
        <name>7</name>
        <name>PDE4D7</name>
        <sequence type="described" ref="VSP_012400 VSP_012401"/>
    </isoform>
    <isoform>
        <id>P14270-9</id>
        <name>8</name>
        <name>PDE4D8</name>
        <sequence type="described" ref="VSP_053486"/>
    </isoform>
    <isoform>
        <id>P14270-6</id>
        <name>9</name>
        <name>PDE4D9</name>
        <sequence type="described" ref="VSP_012402 VSP_012403"/>
    </isoform>
</comment>
<comment type="tissue specificity">
    <text evidence="8 9">Expressed in epithelial cells. Isoform 33, isoform 4, isoform 5 and isoform 9 are expressed in brain. Isoform 33, isoform 5, isoform 8 and isoform 9 are expressed in heart (at protein level). Isoform 4 and isoform 6 are strongly expressed in cortex and cerebellum. Isoform 7 is strongly expressed in cortex and testis; weakly expressed in kidney, lung, spleen and cerebellum. Isoform 8 is strongly expressed in lung, heart and liver. Isoform 31, isoform 32, isoform 33, isoform 5 and isoform 9 are widely distributed.</text>
</comment>
<comment type="induction">
    <text evidence="10">Up-regulated by cAMP and follicle-stimulating hormone.</text>
</comment>
<comment type="PTM">
    <text evidence="6">Isoform 1 and isoform 9 are rapidly activated by PKA through phosphorylation. Long isoforms that share a conserved PKA phosphorylation site in the N-terminus are also activated.</text>
</comment>
<comment type="PTM">
    <text evidence="1">Sumoylation of long isoforms by PIAS4 augments their activation by PKA phosphorylation and represses their inhibition by ERK phosphorylation.</text>
</comment>
<comment type="similarity">
    <text evidence="17">Belongs to the cyclic nucleotide phosphodiesterase family. PDE4 subfamily.</text>
</comment>
<keyword id="KW-0025">Alternative splicing</keyword>
<keyword id="KW-0114">cAMP</keyword>
<keyword id="KW-1003">Cell membrane</keyword>
<keyword id="KW-0963">Cytoplasm</keyword>
<keyword id="KW-0206">Cytoskeleton</keyword>
<keyword id="KW-0378">Hydrolase</keyword>
<keyword id="KW-1017">Isopeptide bond</keyword>
<keyword id="KW-0460">Magnesium</keyword>
<keyword id="KW-0464">Manganese</keyword>
<keyword id="KW-0472">Membrane</keyword>
<keyword id="KW-0479">Metal-binding</keyword>
<keyword id="KW-0597">Phosphoprotein</keyword>
<keyword id="KW-1185">Reference proteome</keyword>
<keyword id="KW-0832">Ubl conjugation</keyword>
<keyword id="KW-0862">Zinc</keyword>
<gene>
    <name type="primary">Pde4d</name>
</gene>
<sequence>MEAEGSSVPARAGSHEGSDSSGGAALKAPKHLWRHEQHHQYPLRQPQFRLLHPHHHLPPPPPPSPQPQLQPPPPPPLPPPPPPPGATRGRYASSGASRVRHRGYSDTERYLYCRAMDRTSYAVETGHRPGLKKSRMSWPSSFQGLRRFDVDNGTSAGRSPLDPMTSPGSGLILQANFVHSQRRESFLYRSDSDYDLSPKSMSRNSSIASDIHGDDLIVTPFAQVLASLRTVRNNFAALTNLQDRAPSKRSPMCNQPSINKATITEEAYQKLASETLEELDWCLDQLETLQTRHSVSEMASNKFKRMLNRELTHLSEMSRSGNQVSEYISNTFLDKQHEVEIPSPTQKEKEKKKRPMSQISGVKKLMHSSSLTNSCIPRFGVKTEQEDVLAKELEDVNKWGLHVFRIAELSGNRPLTVIMHTIFQERDLLKTFKIPVDTLITYLMTLEDHYHADVAYHNNIHAADVVQSTHVLLSTPALEAVFTDLEILAAIFASAIHDVDHPGVSNQFLINTNSELALMYNDSSVLENHHLAVGFKLLQEENCDIFQNLTKKQRQSLRKMAIDIVLATDMSKHMNLLADLKTMVETKKVTSSGVLLLDNYSDRIQVLQNMVHCADLSNPTKPLQLYRQWTDRIMEEFFRQGDRERERGMEISPMCDKHNASVEKSQVGFIDYIVHPLWETWADLVHPDAQDILDTLEDNREWYQSTIPQSPSPAPDDQEDGRQGQTEKFQFELTLEEDGESDTEKDSGSQVEEDTSCSDSKTLCTQDSESTEIPLDEQVEEEAVAEEESQPQTGVADDCCPDT</sequence>
<reference key="1">
    <citation type="journal article" date="1989" name="Proc. Natl. Acad. Sci. U.S.A.">
        <title>The mRNA encoding a high-affinity cAMP phosphodiesterase is regulated by hormones and cAMP.</title>
        <authorList>
            <person name="Swinnen J.V."/>
            <person name="Joseph D.R."/>
            <person name="Conti M."/>
        </authorList>
    </citation>
    <scope>NUCLEOTIDE SEQUENCE [MRNA] (ISOFORM 31)</scope>
    <scope>INDUCTION</scope>
    <source>
        <tissue>Testis</tissue>
    </source>
</reference>
<reference key="2">
    <citation type="journal article" date="1994" name="J. Biol. Chem.">
        <title>The ratPDE3/IVd phosphodiesterase gene codes for multiple proteins differentially activated by cAMP-dependent protein kinase.</title>
        <authorList>
            <person name="Sette C."/>
            <person name="Vicini E."/>
            <person name="Conti M."/>
        </authorList>
    </citation>
    <scope>NUCLEOTIDE SEQUENCE [MRNA] (ISOFORMS 31; 32 AND 33)</scope>
</reference>
<reference key="3">
    <citation type="submission" date="1997-10" db="EMBL/GenBank/DDBJ databases">
        <authorList>
            <person name="Conti M."/>
        </authorList>
    </citation>
    <scope>SEQUENCE REVISION TO 6</scope>
</reference>
<reference key="4">
    <citation type="journal article" date="1994" name="J. Biol. Chem.">
        <title>Structure of two rat genes coding for closely related rolipram-sensitive cAMP phosphodiesterases. Multiple mRNA variants originate from alternative splicing and multiple start sites.</title>
        <authorList>
            <person name="Monaco L."/>
            <person name="Vicini E."/>
            <person name="Conti M."/>
        </authorList>
    </citation>
    <scope>NUCLEOTIDE SEQUENCE [GENOMIC DNA] (ISOFORMS 31 AND 32)</scope>
    <source>
        <strain>Wistar</strain>
    </source>
</reference>
<reference key="5">
    <citation type="journal article" date="1994" name="J. Biol. Chem.">
        <authorList>
            <person name="Monaco L."/>
            <person name="Vicini E."/>
            <person name="Conti M."/>
        </authorList>
    </citation>
    <scope>ERRATUM OF PUBMED:8276818</scope>
</reference>
<reference key="6">
    <citation type="submission" date="1997-10" db="EMBL/GenBank/DDBJ databases">
        <title>Characterization of a cAMP-specific phosphodiesterase variant (PDE4D4) expressed in the rat brain.</title>
        <authorList>
            <person name="Jin S.-L.C."/>
            <person name="Kuo W.-P."/>
            <person name="Conti M."/>
        </authorList>
    </citation>
    <scope>NUCLEOTIDE SEQUENCE [MRNA] (ISOFORM 4)</scope>
    <source>
        <strain>Sprague-Dawley</strain>
        <tissue>Brain</tissue>
    </source>
</reference>
<reference key="7">
    <citation type="journal article" date="2003" name="Cell. Signal.">
        <title>Cloning and characterization of novel PDE4D isoforms PDE4D6 and PDE4D7.</title>
        <authorList>
            <person name="Wang D."/>
            <person name="Deng C."/>
            <person name="Bugaj-Gaweda B."/>
            <person name="Kwan M."/>
            <person name="Gunwaldsen C."/>
            <person name="Leonard C."/>
            <person name="Xin X."/>
            <person name="Hu Y."/>
            <person name="Unterbeck A."/>
            <person name="De Vivo M."/>
        </authorList>
    </citation>
    <scope>NUCLEOTIDE SEQUENCE [MRNA] (ISOFORMS 6 AND 7)</scope>
    <source>
        <strain>Sprague-Dawley</strain>
    </source>
</reference>
<reference key="8">
    <citation type="journal article" date="2007" name="Biochim. Biophys. Acta">
        <title>Alterations in proteoglycan synthesis selectively impair FSH-induced particulate cAMP-phosphodiesterase 4 (PDE4) activation in immature rat Sertoli cells.</title>
        <authorList>
            <person name="Levallet G."/>
            <person name="Levallet J."/>
            <person name="Bonnamy P.J."/>
        </authorList>
    </citation>
    <scope>NUCLEOTIDE SEQUENCE [MRNA] (ISOFORMS 5 AND 8)</scope>
    <scope>BIOPHYSICOCHEMICAL PROPERTIES</scope>
    <scope>ACTIVITY REGULATION</scope>
    <scope>TISSUE SPECIFICITY</scope>
    <source>
        <strain>Sprague-Dawley</strain>
    </source>
</reference>
<reference key="9">
    <citation type="submission" date="2003-09" db="EMBL/GenBank/DDBJ databases">
        <title>Novel PDE4D isoform, PDE4D9.</title>
        <authorList>
            <person name="Gaweda B."/>
            <person name="De Vivo M."/>
            <person name="Wang D."/>
        </authorList>
    </citation>
    <scope>NUCLEOTIDE SEQUENCE [MRNA] (ISOFORM 9)</scope>
</reference>
<reference key="10">
    <citation type="journal article" date="2004" name="Nature">
        <title>Genome sequence of the Brown Norway rat yields insights into mammalian evolution.</title>
        <authorList>
            <person name="Gibbs R.A."/>
            <person name="Weinstock G.M."/>
            <person name="Metzker M.L."/>
            <person name="Muzny D.M."/>
            <person name="Sodergren E.J."/>
            <person name="Scherer S."/>
            <person name="Scott G."/>
            <person name="Steffen D."/>
            <person name="Worley K.C."/>
            <person name="Burch P.E."/>
            <person name="Okwuonu G."/>
            <person name="Hines S."/>
            <person name="Lewis L."/>
            <person name="Deramo C."/>
            <person name="Delgado O."/>
            <person name="Dugan-Rocha S."/>
            <person name="Miner G."/>
            <person name="Morgan M."/>
            <person name="Hawes A."/>
            <person name="Gill R."/>
            <person name="Holt R.A."/>
            <person name="Adams M.D."/>
            <person name="Amanatides P.G."/>
            <person name="Baden-Tillson H."/>
            <person name="Barnstead M."/>
            <person name="Chin S."/>
            <person name="Evans C.A."/>
            <person name="Ferriera S."/>
            <person name="Fosler C."/>
            <person name="Glodek A."/>
            <person name="Gu Z."/>
            <person name="Jennings D."/>
            <person name="Kraft C.L."/>
            <person name="Nguyen T."/>
            <person name="Pfannkoch C.M."/>
            <person name="Sitter C."/>
            <person name="Sutton G.G."/>
            <person name="Venter J.C."/>
            <person name="Woodage T."/>
            <person name="Smith D."/>
            <person name="Lee H.-M."/>
            <person name="Gustafson E."/>
            <person name="Cahill P."/>
            <person name="Kana A."/>
            <person name="Doucette-Stamm L."/>
            <person name="Weinstock K."/>
            <person name="Fechtel K."/>
            <person name="Weiss R.B."/>
            <person name="Dunn D.M."/>
            <person name="Green E.D."/>
            <person name="Blakesley R.W."/>
            <person name="Bouffard G.G."/>
            <person name="De Jong P.J."/>
            <person name="Osoegawa K."/>
            <person name="Zhu B."/>
            <person name="Marra M."/>
            <person name="Schein J."/>
            <person name="Bosdet I."/>
            <person name="Fjell C."/>
            <person name="Jones S."/>
            <person name="Krzywinski M."/>
            <person name="Mathewson C."/>
            <person name="Siddiqui A."/>
            <person name="Wye N."/>
            <person name="McPherson J."/>
            <person name="Zhao S."/>
            <person name="Fraser C.M."/>
            <person name="Shetty J."/>
            <person name="Shatsman S."/>
            <person name="Geer K."/>
            <person name="Chen Y."/>
            <person name="Abramzon S."/>
            <person name="Nierman W.C."/>
            <person name="Havlak P.H."/>
            <person name="Chen R."/>
            <person name="Durbin K.J."/>
            <person name="Egan A."/>
            <person name="Ren Y."/>
            <person name="Song X.-Z."/>
            <person name="Li B."/>
            <person name="Liu Y."/>
            <person name="Qin X."/>
            <person name="Cawley S."/>
            <person name="Cooney A.J."/>
            <person name="D'Souza L.M."/>
            <person name="Martin K."/>
            <person name="Wu J.Q."/>
            <person name="Gonzalez-Garay M.L."/>
            <person name="Jackson A.R."/>
            <person name="Kalafus K.J."/>
            <person name="McLeod M.P."/>
            <person name="Milosavljevic A."/>
            <person name="Virk D."/>
            <person name="Volkov A."/>
            <person name="Wheeler D.A."/>
            <person name="Zhang Z."/>
            <person name="Bailey J.A."/>
            <person name="Eichler E.E."/>
            <person name="Tuzun E."/>
            <person name="Birney E."/>
            <person name="Mongin E."/>
            <person name="Ureta-Vidal A."/>
            <person name="Woodwark C."/>
            <person name="Zdobnov E."/>
            <person name="Bork P."/>
            <person name="Suyama M."/>
            <person name="Torrents D."/>
            <person name="Alexandersson M."/>
            <person name="Trask B.J."/>
            <person name="Young J.M."/>
            <person name="Huang H."/>
            <person name="Wang H."/>
            <person name="Xing H."/>
            <person name="Daniels S."/>
            <person name="Gietzen D."/>
            <person name="Schmidt J."/>
            <person name="Stevens K."/>
            <person name="Vitt U."/>
            <person name="Wingrove J."/>
            <person name="Camara F."/>
            <person name="Mar Alba M."/>
            <person name="Abril J.F."/>
            <person name="Guigo R."/>
            <person name="Smit A."/>
            <person name="Dubchak I."/>
            <person name="Rubin E.M."/>
            <person name="Couronne O."/>
            <person name="Poliakov A."/>
            <person name="Huebner N."/>
            <person name="Ganten D."/>
            <person name="Goesele C."/>
            <person name="Hummel O."/>
            <person name="Kreitler T."/>
            <person name="Lee Y.-A."/>
            <person name="Monti J."/>
            <person name="Schulz H."/>
            <person name="Zimdahl H."/>
            <person name="Himmelbauer H."/>
            <person name="Lehrach H."/>
            <person name="Jacob H.J."/>
            <person name="Bromberg S."/>
            <person name="Gullings-Handley J."/>
            <person name="Jensen-Seaman M.I."/>
            <person name="Kwitek A.E."/>
            <person name="Lazar J."/>
            <person name="Pasko D."/>
            <person name="Tonellato P.J."/>
            <person name="Twigger S."/>
            <person name="Ponting C.P."/>
            <person name="Duarte J.M."/>
            <person name="Rice S."/>
            <person name="Goodstadt L."/>
            <person name="Beatson S.A."/>
            <person name="Emes R.D."/>
            <person name="Winter E.E."/>
            <person name="Webber C."/>
            <person name="Brandt P."/>
            <person name="Nyakatura G."/>
            <person name="Adetobi M."/>
            <person name="Chiaromonte F."/>
            <person name="Elnitski L."/>
            <person name="Eswara P."/>
            <person name="Hardison R.C."/>
            <person name="Hou M."/>
            <person name="Kolbe D."/>
            <person name="Makova K."/>
            <person name="Miller W."/>
            <person name="Nekrutenko A."/>
            <person name="Riemer C."/>
            <person name="Schwartz S."/>
            <person name="Taylor J."/>
            <person name="Yang S."/>
            <person name="Zhang Y."/>
            <person name="Lindpaintner K."/>
            <person name="Andrews T.D."/>
            <person name="Caccamo M."/>
            <person name="Clamp M."/>
            <person name="Clarke L."/>
            <person name="Curwen V."/>
            <person name="Durbin R.M."/>
            <person name="Eyras E."/>
            <person name="Searle S.M."/>
            <person name="Cooper G.M."/>
            <person name="Batzoglou S."/>
            <person name="Brudno M."/>
            <person name="Sidow A."/>
            <person name="Stone E.A."/>
            <person name="Payseur B.A."/>
            <person name="Bourque G."/>
            <person name="Lopez-Otin C."/>
            <person name="Puente X.S."/>
            <person name="Chakrabarti K."/>
            <person name="Chatterji S."/>
            <person name="Dewey C."/>
            <person name="Pachter L."/>
            <person name="Bray N."/>
            <person name="Yap V.B."/>
            <person name="Caspi A."/>
            <person name="Tesler G."/>
            <person name="Pevzner P.A."/>
            <person name="Haussler D."/>
            <person name="Roskin K.M."/>
            <person name="Baertsch R."/>
            <person name="Clawson H."/>
            <person name="Furey T.S."/>
            <person name="Hinrichs A.S."/>
            <person name="Karolchik D."/>
            <person name="Kent W.J."/>
            <person name="Rosenbloom K.R."/>
            <person name="Trumbower H."/>
            <person name="Weirauch M."/>
            <person name="Cooper D.N."/>
            <person name="Stenson P.D."/>
            <person name="Ma B."/>
            <person name="Brent M."/>
            <person name="Arumugam M."/>
            <person name="Shteynberg D."/>
            <person name="Copley R.R."/>
            <person name="Taylor M.S."/>
            <person name="Riethman H."/>
            <person name="Mudunuri U."/>
            <person name="Peterson J."/>
            <person name="Guyer M."/>
            <person name="Felsenfeld A."/>
            <person name="Old S."/>
            <person name="Mockrin S."/>
            <person name="Collins F.S."/>
        </authorList>
    </citation>
    <scope>NUCLEOTIDE SEQUENCE [LARGE SCALE GENOMIC DNA]</scope>
    <source>
        <strain>Brown Norway</strain>
    </source>
</reference>
<reference key="11">
    <citation type="journal article" date="1989" name="Proc. Natl. Acad. Sci. U.S.A.">
        <title>Molecular cloning of rat homologues of the Drosophila melanogaster dunce cAMP phosphodiesterase: evidence for a family of genes.</title>
        <authorList>
            <person name="Swinnen J.V."/>
            <person name="Joseph D.R."/>
            <person name="Conti M."/>
        </authorList>
    </citation>
    <scope>NUCLEOTIDE SEQUENCE OF 224-672</scope>
    <source>
        <tissue>Testis</tissue>
    </source>
</reference>
<reference key="12">
    <citation type="journal article" date="1994" name="Gene">
        <title>Differential CNS expression of alternative mRNA isoforms of the mammalian genes encoding cAMP-specific phosphodiesterases.</title>
        <authorList>
            <person name="Bolger G.B."/>
            <person name="Rodgers L."/>
            <person name="Riggs M."/>
        </authorList>
    </citation>
    <scope>NUCLEOTIDE SEQUENCE [MRNA] OF 226-803 (ISOFORM 33)</scope>
    <scope>NUCLEOTIDE SEQUENCE [MRNA] OF 253-803 (ISOFORM 31)</scope>
</reference>
<reference key="13">
    <citation type="journal article" date="1999" name="J. Biol. Chem.">
        <title>Phosphorylation-mediated activation and translocation of the cyclic AMP-specific phosphodiesterase PDE4D3 by cyclic AMP-dependent protein kinase and mitogen-activated protein kinases. A potential mechanism allowing for the coordinated regulation of PDE4D activity and targeting.</title>
        <authorList>
            <person name="Liu H."/>
            <person name="Maurice D.H."/>
        </authorList>
    </citation>
    <scope>PHOSPHORYLATION</scope>
    <scope>SUBCELLULAR LOCATION</scope>
</reference>
<reference key="14">
    <citation type="journal article" date="2001" name="J. Biol. Chem.">
        <title>Myomegalin is a novel protein of the Golgi/centrosome that interacts with a cyclic nucleotide phosphodiesterase.</title>
        <authorList>
            <person name="Verde I."/>
            <person name="Pahlke G."/>
            <person name="Salanova M."/>
            <person name="Zhang G."/>
            <person name="Wang S."/>
            <person name="Coletti D."/>
            <person name="Onuffer J."/>
            <person name="Jin S.-L.C."/>
            <person name="Conti M."/>
        </authorList>
    </citation>
    <scope>INTERACTION WITH PDE4DIP</scope>
</reference>
<reference key="15">
    <citation type="journal article" date="2001" name="J. Biol. Chem.">
        <title>Phosphodiesterase 4D and protein kinase a type II constitute a signaling unit in the centrosomal area.</title>
        <authorList>
            <person name="Tasken K.A."/>
            <person name="Collas P."/>
            <person name="Kemmner W.A."/>
            <person name="Witczak O."/>
            <person name="Conti M."/>
            <person name="Tasken K."/>
        </authorList>
    </citation>
    <scope>SUBCELLULAR LOCATION</scope>
    <scope>INTERACTION WITH THE CENTROSOME (ISOFORM 33)</scope>
</reference>
<reference key="16">
    <citation type="journal article" date="2005" name="Biochem. J.">
        <title>Splice variants of the cyclic nucleotide phosphodiesterase PDE4D are differentially expressed and regulated in rat tissue.</title>
        <authorList>
            <person name="Richter W."/>
            <person name="Jin S.L."/>
            <person name="Conti M."/>
        </authorList>
    </citation>
    <scope>ALTERNATIVE SPLICING (ISOFORMS 4; 5; 6; 7; 8; 9; 31; 32 AND 33)</scope>
</reference>
<reference key="17">
    <citation type="journal article" date="2007" name="J. Biol. Chem.">
        <title>Dynamic regulation of cystic fibrosis transmembrane conductance regulator by competitive interactions of molecular adaptors.</title>
        <authorList>
            <person name="Lee J.H."/>
            <person name="Richter W."/>
            <person name="Namkung W."/>
            <person name="Kim K.H."/>
            <person name="Kim E."/>
            <person name="Conti M."/>
            <person name="Lee M.G."/>
        </authorList>
    </citation>
    <scope>INTERACTION WITH SHANK2</scope>
    <scope>SUBCELLULAR LOCATION</scope>
    <scope>TISSUE SPECIFICITY</scope>
</reference>
<reference key="18">
    <citation type="journal article" date="2012" name="Nat. Commun.">
        <title>Quantitative maps of protein phosphorylation sites across 14 different rat organs and tissues.</title>
        <authorList>
            <person name="Lundby A."/>
            <person name="Secher A."/>
            <person name="Lage K."/>
            <person name="Nordsborg N.B."/>
            <person name="Dmytriyev A."/>
            <person name="Lundby C."/>
            <person name="Olsen J.V."/>
        </authorList>
    </citation>
    <scope>PHOSPHORYLATION [LARGE SCALE ANALYSIS] AT SER-137</scope>
    <scope>PHOSPHORYLATION [LARGE SCALE ANALYSIS] AT SER-52 AND SER-56 (ISOFORM 5)</scope>
    <scope>IDENTIFICATION BY MASS SPECTROMETRY [LARGE SCALE ANALYSIS]</scope>
</reference>
<name>PDE4D_RAT</name>
<accession>P14270</accession>
<accession>A1E347</accession>
<accession>A1EC59</accession>
<accession>F1M1H7</accession>
<accession>O35470</accession>
<accession>Q6TRI0</accession>
<accession>Q8CG04</accession>
<accession>Q8CG06</accession>